<dbReference type="EC" id="2.7.8.13" evidence="1"/>
<dbReference type="EMBL" id="AM747720">
    <property type="protein sequence ID" value="CAR53788.1"/>
    <property type="molecule type" value="Genomic_DNA"/>
</dbReference>
<dbReference type="RefSeq" id="WP_006477019.1">
    <property type="nucleotide sequence ID" value="NC_011000.1"/>
</dbReference>
<dbReference type="SMR" id="B4E6J5"/>
<dbReference type="GeneID" id="93193209"/>
<dbReference type="KEGG" id="bcj:BCAL3465"/>
<dbReference type="eggNOG" id="COG0472">
    <property type="taxonomic scope" value="Bacteria"/>
</dbReference>
<dbReference type="HOGENOM" id="CLU_023982_0_0_4"/>
<dbReference type="BioCyc" id="BCEN216591:G1G1V-3853-MONOMER"/>
<dbReference type="UniPathway" id="UPA00219"/>
<dbReference type="Proteomes" id="UP000001035">
    <property type="component" value="Chromosome 1"/>
</dbReference>
<dbReference type="GO" id="GO:0005886">
    <property type="term" value="C:plasma membrane"/>
    <property type="evidence" value="ECO:0007669"/>
    <property type="project" value="UniProtKB-SubCell"/>
</dbReference>
<dbReference type="GO" id="GO:0046872">
    <property type="term" value="F:metal ion binding"/>
    <property type="evidence" value="ECO:0007669"/>
    <property type="project" value="UniProtKB-KW"/>
</dbReference>
<dbReference type="GO" id="GO:0008963">
    <property type="term" value="F:phospho-N-acetylmuramoyl-pentapeptide-transferase activity"/>
    <property type="evidence" value="ECO:0007669"/>
    <property type="project" value="UniProtKB-UniRule"/>
</dbReference>
<dbReference type="GO" id="GO:0051992">
    <property type="term" value="F:UDP-N-acetylmuramoyl-L-alanyl-D-glutamyl-meso-2,6-diaminopimelyl-D-alanyl-D-alanine:undecaprenyl-phosphate transferase activity"/>
    <property type="evidence" value="ECO:0007669"/>
    <property type="project" value="RHEA"/>
</dbReference>
<dbReference type="GO" id="GO:0051301">
    <property type="term" value="P:cell division"/>
    <property type="evidence" value="ECO:0007669"/>
    <property type="project" value="UniProtKB-KW"/>
</dbReference>
<dbReference type="GO" id="GO:0071555">
    <property type="term" value="P:cell wall organization"/>
    <property type="evidence" value="ECO:0007669"/>
    <property type="project" value="UniProtKB-KW"/>
</dbReference>
<dbReference type="GO" id="GO:0009252">
    <property type="term" value="P:peptidoglycan biosynthetic process"/>
    <property type="evidence" value="ECO:0007669"/>
    <property type="project" value="UniProtKB-UniRule"/>
</dbReference>
<dbReference type="GO" id="GO:0008360">
    <property type="term" value="P:regulation of cell shape"/>
    <property type="evidence" value="ECO:0007669"/>
    <property type="project" value="UniProtKB-KW"/>
</dbReference>
<dbReference type="CDD" id="cd06852">
    <property type="entry name" value="GT_MraY"/>
    <property type="match status" value="1"/>
</dbReference>
<dbReference type="HAMAP" id="MF_00038">
    <property type="entry name" value="MraY"/>
    <property type="match status" value="1"/>
</dbReference>
<dbReference type="InterPro" id="IPR000715">
    <property type="entry name" value="Glycosyl_transferase_4"/>
</dbReference>
<dbReference type="InterPro" id="IPR003524">
    <property type="entry name" value="PNAcMuramoyl-5peptid_Trfase"/>
</dbReference>
<dbReference type="InterPro" id="IPR018480">
    <property type="entry name" value="PNAcMuramoyl-5peptid_Trfase_CS"/>
</dbReference>
<dbReference type="NCBIfam" id="TIGR00445">
    <property type="entry name" value="mraY"/>
    <property type="match status" value="1"/>
</dbReference>
<dbReference type="PANTHER" id="PTHR22926">
    <property type="entry name" value="PHOSPHO-N-ACETYLMURAMOYL-PENTAPEPTIDE-TRANSFERASE"/>
    <property type="match status" value="1"/>
</dbReference>
<dbReference type="PANTHER" id="PTHR22926:SF5">
    <property type="entry name" value="PHOSPHO-N-ACETYLMURAMOYL-PENTAPEPTIDE-TRANSFERASE HOMOLOG"/>
    <property type="match status" value="1"/>
</dbReference>
<dbReference type="Pfam" id="PF00953">
    <property type="entry name" value="Glycos_transf_4"/>
    <property type="match status" value="1"/>
</dbReference>
<dbReference type="Pfam" id="PF10555">
    <property type="entry name" value="MraY_sig1"/>
    <property type="match status" value="1"/>
</dbReference>
<dbReference type="PROSITE" id="PS01347">
    <property type="entry name" value="MRAY_1"/>
    <property type="match status" value="1"/>
</dbReference>
<dbReference type="PROSITE" id="PS01348">
    <property type="entry name" value="MRAY_2"/>
    <property type="match status" value="1"/>
</dbReference>
<proteinExistence type="inferred from homology"/>
<sequence>MLLALAQWLQGDASFLRLFTYLTFRAVMATITALGIGLVCGPWVIRKLTQMKVGQAVRKDGPQTHLVKSGTPTMGGVLILIGIAVATLLWGDLTNRFIWIVMLVTFGFGVIGWVDDYRKVVHKDPRGMSSREKYFWQSVIGLFAAVYLAFSVSEANNVRVFDLFMAWVRSGLSMGLPARADLMLPFLKSISYPLGVWGFIVLTYFVIVGASNAVNLTDGLDGLVIMPVVLVGASLGVFAYVMGSAVYSKYLLFPHIPGAGELLIFCSAMGGAGLAFLWYNTHPAQVFMGDVGALALGGALGTVAVIVRQEIVLFIMGGIFVAETLSVMLQVSWFKYTKKRYGEGRRLLKMAPLHHHFELSGWKETQVVVRFWIITLMLCLFGLTTLKLR</sequence>
<name>MRAY_BURCJ</name>
<organism>
    <name type="scientific">Burkholderia cenocepacia (strain ATCC BAA-245 / DSM 16553 / LMG 16656 / NCTC 13227 / J2315 / CF5610)</name>
    <name type="common">Burkholderia cepacia (strain J2315)</name>
    <dbReference type="NCBI Taxonomy" id="216591"/>
    <lineage>
        <taxon>Bacteria</taxon>
        <taxon>Pseudomonadati</taxon>
        <taxon>Pseudomonadota</taxon>
        <taxon>Betaproteobacteria</taxon>
        <taxon>Burkholderiales</taxon>
        <taxon>Burkholderiaceae</taxon>
        <taxon>Burkholderia</taxon>
        <taxon>Burkholderia cepacia complex</taxon>
    </lineage>
</organism>
<feature type="chain" id="PRO_1000090601" description="Phospho-N-acetylmuramoyl-pentapeptide-transferase">
    <location>
        <begin position="1"/>
        <end position="389"/>
    </location>
</feature>
<feature type="transmembrane region" description="Helical" evidence="1">
    <location>
        <begin position="25"/>
        <end position="45"/>
    </location>
</feature>
<feature type="transmembrane region" description="Helical" evidence="1">
    <location>
        <begin position="73"/>
        <end position="93"/>
    </location>
</feature>
<feature type="transmembrane region" description="Helical" evidence="1">
    <location>
        <begin position="97"/>
        <end position="117"/>
    </location>
</feature>
<feature type="transmembrane region" description="Helical" evidence="1">
    <location>
        <begin position="135"/>
        <end position="155"/>
    </location>
</feature>
<feature type="transmembrane region" description="Helical" evidence="1">
    <location>
        <begin position="190"/>
        <end position="210"/>
    </location>
</feature>
<feature type="transmembrane region" description="Helical" evidence="1">
    <location>
        <begin position="222"/>
        <end position="242"/>
    </location>
</feature>
<feature type="transmembrane region" description="Helical" evidence="1">
    <location>
        <begin position="258"/>
        <end position="278"/>
    </location>
</feature>
<feature type="transmembrane region" description="Helical" evidence="1">
    <location>
        <begin position="286"/>
        <end position="306"/>
    </location>
</feature>
<feature type="transmembrane region" description="Helical" evidence="1">
    <location>
        <begin position="311"/>
        <end position="331"/>
    </location>
</feature>
<feature type="transmembrane region" description="Helical" evidence="1">
    <location>
        <begin position="366"/>
        <end position="386"/>
    </location>
</feature>
<keyword id="KW-0131">Cell cycle</keyword>
<keyword id="KW-0132">Cell division</keyword>
<keyword id="KW-0997">Cell inner membrane</keyword>
<keyword id="KW-1003">Cell membrane</keyword>
<keyword id="KW-0133">Cell shape</keyword>
<keyword id="KW-0961">Cell wall biogenesis/degradation</keyword>
<keyword id="KW-0460">Magnesium</keyword>
<keyword id="KW-0472">Membrane</keyword>
<keyword id="KW-0479">Metal-binding</keyword>
<keyword id="KW-0573">Peptidoglycan synthesis</keyword>
<keyword id="KW-0808">Transferase</keyword>
<keyword id="KW-0812">Transmembrane</keyword>
<keyword id="KW-1133">Transmembrane helix</keyword>
<protein>
    <recommendedName>
        <fullName evidence="1">Phospho-N-acetylmuramoyl-pentapeptide-transferase</fullName>
        <ecNumber evidence="1">2.7.8.13</ecNumber>
    </recommendedName>
    <alternativeName>
        <fullName evidence="1">UDP-MurNAc-pentapeptide phosphotransferase</fullName>
    </alternativeName>
</protein>
<reference key="1">
    <citation type="journal article" date="2009" name="J. Bacteriol.">
        <title>The genome of Burkholderia cenocepacia J2315, an epidemic pathogen of cystic fibrosis patients.</title>
        <authorList>
            <person name="Holden M.T."/>
            <person name="Seth-Smith H.M."/>
            <person name="Crossman L.C."/>
            <person name="Sebaihia M."/>
            <person name="Bentley S.D."/>
            <person name="Cerdeno-Tarraga A.M."/>
            <person name="Thomson N.R."/>
            <person name="Bason N."/>
            <person name="Quail M.A."/>
            <person name="Sharp S."/>
            <person name="Cherevach I."/>
            <person name="Churcher C."/>
            <person name="Goodhead I."/>
            <person name="Hauser H."/>
            <person name="Holroyd N."/>
            <person name="Mungall K."/>
            <person name="Scott P."/>
            <person name="Walker D."/>
            <person name="White B."/>
            <person name="Rose H."/>
            <person name="Iversen P."/>
            <person name="Mil-Homens D."/>
            <person name="Rocha E.P."/>
            <person name="Fialho A.M."/>
            <person name="Baldwin A."/>
            <person name="Dowson C."/>
            <person name="Barrell B.G."/>
            <person name="Govan J.R."/>
            <person name="Vandamme P."/>
            <person name="Hart C.A."/>
            <person name="Mahenthiralingam E."/>
            <person name="Parkhill J."/>
        </authorList>
    </citation>
    <scope>NUCLEOTIDE SEQUENCE [LARGE SCALE GENOMIC DNA]</scope>
    <source>
        <strain>ATCC BAA-245 / DSM 16553 / LMG 16656 / NCTC 13227 / J2315 / CF5610</strain>
    </source>
</reference>
<gene>
    <name evidence="1" type="primary">mraY</name>
    <name type="ordered locus">BceJ2315_34030</name>
    <name type="ORF">BCAL3465</name>
</gene>
<accession>B4E6J5</accession>
<evidence type="ECO:0000255" key="1">
    <source>
        <dbReference type="HAMAP-Rule" id="MF_00038"/>
    </source>
</evidence>
<comment type="function">
    <text evidence="1">Catalyzes the initial step of the lipid cycle reactions in the biosynthesis of the cell wall peptidoglycan: transfers peptidoglycan precursor phospho-MurNAc-pentapeptide from UDP-MurNAc-pentapeptide onto the lipid carrier undecaprenyl phosphate, yielding undecaprenyl-pyrophosphoryl-MurNAc-pentapeptide, known as lipid I.</text>
</comment>
<comment type="catalytic activity">
    <reaction evidence="1">
        <text>UDP-N-acetyl-alpha-D-muramoyl-L-alanyl-gamma-D-glutamyl-meso-2,6-diaminopimeloyl-D-alanyl-D-alanine + di-trans,octa-cis-undecaprenyl phosphate = di-trans,octa-cis-undecaprenyl diphospho-N-acetyl-alpha-D-muramoyl-L-alanyl-D-glutamyl-meso-2,6-diaminopimeloyl-D-alanyl-D-alanine + UMP</text>
        <dbReference type="Rhea" id="RHEA:28386"/>
        <dbReference type="ChEBI" id="CHEBI:57865"/>
        <dbReference type="ChEBI" id="CHEBI:60392"/>
        <dbReference type="ChEBI" id="CHEBI:61386"/>
        <dbReference type="ChEBI" id="CHEBI:61387"/>
        <dbReference type="EC" id="2.7.8.13"/>
    </reaction>
</comment>
<comment type="cofactor">
    <cofactor evidence="1">
        <name>Mg(2+)</name>
        <dbReference type="ChEBI" id="CHEBI:18420"/>
    </cofactor>
</comment>
<comment type="pathway">
    <text evidence="1">Cell wall biogenesis; peptidoglycan biosynthesis.</text>
</comment>
<comment type="subcellular location">
    <subcellularLocation>
        <location evidence="1">Cell inner membrane</location>
        <topology evidence="1">Multi-pass membrane protein</topology>
    </subcellularLocation>
</comment>
<comment type="similarity">
    <text evidence="1">Belongs to the glycosyltransferase 4 family. MraY subfamily.</text>
</comment>